<gene>
    <name evidence="1" type="primary">secA1</name>
    <name type="ordered locus">Mvan_1762</name>
</gene>
<name>SECA1_MYCVP</name>
<dbReference type="EC" id="7.4.2.8" evidence="1"/>
<dbReference type="EMBL" id="CP000511">
    <property type="protein sequence ID" value="ABM12584.1"/>
    <property type="molecule type" value="Genomic_DNA"/>
</dbReference>
<dbReference type="SMR" id="A1T5Y4"/>
<dbReference type="STRING" id="350058.Mvan_1762"/>
<dbReference type="KEGG" id="mva:Mvan_1762"/>
<dbReference type="eggNOG" id="COG0653">
    <property type="taxonomic scope" value="Bacteria"/>
</dbReference>
<dbReference type="HOGENOM" id="CLU_005314_3_0_11"/>
<dbReference type="Proteomes" id="UP000009159">
    <property type="component" value="Chromosome"/>
</dbReference>
<dbReference type="GO" id="GO:0031522">
    <property type="term" value="C:cell envelope Sec protein transport complex"/>
    <property type="evidence" value="ECO:0007669"/>
    <property type="project" value="TreeGrafter"/>
</dbReference>
<dbReference type="GO" id="GO:0005829">
    <property type="term" value="C:cytosol"/>
    <property type="evidence" value="ECO:0007669"/>
    <property type="project" value="TreeGrafter"/>
</dbReference>
<dbReference type="GO" id="GO:0005886">
    <property type="term" value="C:plasma membrane"/>
    <property type="evidence" value="ECO:0007669"/>
    <property type="project" value="UniProtKB-SubCell"/>
</dbReference>
<dbReference type="GO" id="GO:0005524">
    <property type="term" value="F:ATP binding"/>
    <property type="evidence" value="ECO:0007669"/>
    <property type="project" value="UniProtKB-UniRule"/>
</dbReference>
<dbReference type="GO" id="GO:0008564">
    <property type="term" value="F:protein-exporting ATPase activity"/>
    <property type="evidence" value="ECO:0007669"/>
    <property type="project" value="UniProtKB-EC"/>
</dbReference>
<dbReference type="GO" id="GO:0065002">
    <property type="term" value="P:intracellular protein transmembrane transport"/>
    <property type="evidence" value="ECO:0007669"/>
    <property type="project" value="UniProtKB-UniRule"/>
</dbReference>
<dbReference type="GO" id="GO:0017038">
    <property type="term" value="P:protein import"/>
    <property type="evidence" value="ECO:0007669"/>
    <property type="project" value="InterPro"/>
</dbReference>
<dbReference type="GO" id="GO:0006605">
    <property type="term" value="P:protein targeting"/>
    <property type="evidence" value="ECO:0007669"/>
    <property type="project" value="UniProtKB-UniRule"/>
</dbReference>
<dbReference type="GO" id="GO:0043952">
    <property type="term" value="P:protein transport by the Sec complex"/>
    <property type="evidence" value="ECO:0007669"/>
    <property type="project" value="TreeGrafter"/>
</dbReference>
<dbReference type="CDD" id="cd17928">
    <property type="entry name" value="DEXDc_SecA"/>
    <property type="match status" value="1"/>
</dbReference>
<dbReference type="CDD" id="cd18803">
    <property type="entry name" value="SF2_C_secA"/>
    <property type="match status" value="1"/>
</dbReference>
<dbReference type="FunFam" id="1.10.3060.10:FF:000002">
    <property type="entry name" value="Preprotein translocase subunit SecA"/>
    <property type="match status" value="1"/>
</dbReference>
<dbReference type="FunFam" id="3.40.50.300:FF:000113">
    <property type="entry name" value="Preprotein translocase subunit SecA"/>
    <property type="match status" value="1"/>
</dbReference>
<dbReference type="FunFam" id="3.40.50.300:FF:000334">
    <property type="entry name" value="Protein translocase subunit SecA"/>
    <property type="match status" value="1"/>
</dbReference>
<dbReference type="FunFam" id="3.90.1440.10:FF:000002">
    <property type="entry name" value="Protein translocase subunit SecA"/>
    <property type="match status" value="1"/>
</dbReference>
<dbReference type="Gene3D" id="1.10.3060.10">
    <property type="entry name" value="Helical scaffold and wing domains of SecA"/>
    <property type="match status" value="1"/>
</dbReference>
<dbReference type="Gene3D" id="3.40.50.300">
    <property type="entry name" value="P-loop containing nucleotide triphosphate hydrolases"/>
    <property type="match status" value="2"/>
</dbReference>
<dbReference type="Gene3D" id="3.90.1440.10">
    <property type="entry name" value="SecA, preprotein cross-linking domain"/>
    <property type="match status" value="1"/>
</dbReference>
<dbReference type="HAMAP" id="MF_01382">
    <property type="entry name" value="SecA"/>
    <property type="match status" value="1"/>
</dbReference>
<dbReference type="InterPro" id="IPR014001">
    <property type="entry name" value="Helicase_ATP-bd"/>
</dbReference>
<dbReference type="InterPro" id="IPR001650">
    <property type="entry name" value="Helicase_C-like"/>
</dbReference>
<dbReference type="InterPro" id="IPR027417">
    <property type="entry name" value="P-loop_NTPase"/>
</dbReference>
<dbReference type="InterPro" id="IPR000185">
    <property type="entry name" value="SecA"/>
</dbReference>
<dbReference type="InterPro" id="IPR020937">
    <property type="entry name" value="SecA_CS"/>
</dbReference>
<dbReference type="InterPro" id="IPR011115">
    <property type="entry name" value="SecA_DEAD"/>
</dbReference>
<dbReference type="InterPro" id="IPR014018">
    <property type="entry name" value="SecA_motor_DEAD"/>
</dbReference>
<dbReference type="InterPro" id="IPR011130">
    <property type="entry name" value="SecA_preprotein_X-link_dom"/>
</dbReference>
<dbReference type="InterPro" id="IPR044722">
    <property type="entry name" value="SecA_SF2_C"/>
</dbReference>
<dbReference type="InterPro" id="IPR011116">
    <property type="entry name" value="SecA_Wing/Scaffold"/>
</dbReference>
<dbReference type="InterPro" id="IPR036266">
    <property type="entry name" value="SecA_Wing/Scaffold_sf"/>
</dbReference>
<dbReference type="InterPro" id="IPR036670">
    <property type="entry name" value="SecA_X-link_sf"/>
</dbReference>
<dbReference type="NCBIfam" id="NF009538">
    <property type="entry name" value="PRK12904.1"/>
    <property type="match status" value="1"/>
</dbReference>
<dbReference type="NCBIfam" id="TIGR00963">
    <property type="entry name" value="secA"/>
    <property type="match status" value="1"/>
</dbReference>
<dbReference type="PANTHER" id="PTHR30612:SF0">
    <property type="entry name" value="CHLOROPLAST PROTEIN-TRANSPORTING ATPASE"/>
    <property type="match status" value="1"/>
</dbReference>
<dbReference type="PANTHER" id="PTHR30612">
    <property type="entry name" value="SECA INNER MEMBRANE COMPONENT OF SEC PROTEIN SECRETION SYSTEM"/>
    <property type="match status" value="1"/>
</dbReference>
<dbReference type="Pfam" id="PF21090">
    <property type="entry name" value="P-loop_SecA"/>
    <property type="match status" value="1"/>
</dbReference>
<dbReference type="Pfam" id="PF07517">
    <property type="entry name" value="SecA_DEAD"/>
    <property type="match status" value="1"/>
</dbReference>
<dbReference type="Pfam" id="PF01043">
    <property type="entry name" value="SecA_PP_bind"/>
    <property type="match status" value="1"/>
</dbReference>
<dbReference type="Pfam" id="PF07516">
    <property type="entry name" value="SecA_SW"/>
    <property type="match status" value="1"/>
</dbReference>
<dbReference type="PRINTS" id="PR00906">
    <property type="entry name" value="SECA"/>
</dbReference>
<dbReference type="SMART" id="SM00957">
    <property type="entry name" value="SecA_DEAD"/>
    <property type="match status" value="1"/>
</dbReference>
<dbReference type="SMART" id="SM00958">
    <property type="entry name" value="SecA_PP_bind"/>
    <property type="match status" value="1"/>
</dbReference>
<dbReference type="SUPFAM" id="SSF81886">
    <property type="entry name" value="Helical scaffold and wing domains of SecA"/>
    <property type="match status" value="1"/>
</dbReference>
<dbReference type="SUPFAM" id="SSF52540">
    <property type="entry name" value="P-loop containing nucleoside triphosphate hydrolases"/>
    <property type="match status" value="2"/>
</dbReference>
<dbReference type="SUPFAM" id="SSF81767">
    <property type="entry name" value="Pre-protein crosslinking domain of SecA"/>
    <property type="match status" value="1"/>
</dbReference>
<dbReference type="PROSITE" id="PS01312">
    <property type="entry name" value="SECA"/>
    <property type="match status" value="1"/>
</dbReference>
<dbReference type="PROSITE" id="PS51196">
    <property type="entry name" value="SECA_MOTOR_DEAD"/>
    <property type="match status" value="1"/>
</dbReference>
<accession>A1T5Y4</accession>
<organism>
    <name type="scientific">Mycolicibacterium vanbaalenii (strain DSM 7251 / JCM 13017 / BCRC 16820 / KCTC 9966 / NRRL B-24157 / PYR-1)</name>
    <name type="common">Mycobacterium vanbaalenii</name>
    <dbReference type="NCBI Taxonomy" id="350058"/>
    <lineage>
        <taxon>Bacteria</taxon>
        <taxon>Bacillati</taxon>
        <taxon>Actinomycetota</taxon>
        <taxon>Actinomycetes</taxon>
        <taxon>Mycobacteriales</taxon>
        <taxon>Mycobacteriaceae</taxon>
        <taxon>Mycolicibacterium</taxon>
    </lineage>
</organism>
<feature type="chain" id="PRO_0000318393" description="Protein translocase subunit SecA 1">
    <location>
        <begin position="1"/>
        <end position="938"/>
    </location>
</feature>
<feature type="region of interest" description="Disordered" evidence="2">
    <location>
        <begin position="865"/>
        <end position="938"/>
    </location>
</feature>
<feature type="compositionally biased region" description="Basic and acidic residues" evidence="2">
    <location>
        <begin position="918"/>
        <end position="927"/>
    </location>
</feature>
<feature type="binding site" evidence="1">
    <location>
        <position position="84"/>
    </location>
    <ligand>
        <name>ATP</name>
        <dbReference type="ChEBI" id="CHEBI:30616"/>
    </ligand>
</feature>
<feature type="binding site" evidence="1">
    <location>
        <begin position="102"/>
        <end position="106"/>
    </location>
    <ligand>
        <name>ATP</name>
        <dbReference type="ChEBI" id="CHEBI:30616"/>
    </ligand>
</feature>
<feature type="binding site" evidence="1">
    <location>
        <position position="491"/>
    </location>
    <ligand>
        <name>ATP</name>
        <dbReference type="ChEBI" id="CHEBI:30616"/>
    </ligand>
</feature>
<proteinExistence type="inferred from homology"/>
<protein>
    <recommendedName>
        <fullName evidence="1">Protein translocase subunit SecA 1</fullName>
        <ecNumber evidence="1">7.4.2.8</ecNumber>
    </recommendedName>
</protein>
<comment type="function">
    <text evidence="1">Part of the Sec protein translocase complex. Interacts with the SecYEG preprotein conducting channel. Has a central role in coupling the hydrolysis of ATP to the transfer of proteins into and across the cell membrane, serving as an ATP-driven molecular motor driving the stepwise translocation of polypeptide chains across the membrane.</text>
</comment>
<comment type="catalytic activity">
    <reaction evidence="1">
        <text>ATP + H2O + cellular proteinSide 1 = ADP + phosphate + cellular proteinSide 2.</text>
        <dbReference type="EC" id="7.4.2.8"/>
    </reaction>
</comment>
<comment type="subunit">
    <text evidence="1">Monomer and homodimer. Part of the essential Sec protein translocation apparatus which comprises SecA, SecYEG and auxiliary proteins SecDF. Other proteins may also be involved.</text>
</comment>
<comment type="subcellular location">
    <subcellularLocation>
        <location evidence="1">Cell membrane</location>
        <topology evidence="1">Peripheral membrane protein</topology>
        <orientation evidence="1">Cytoplasmic side</orientation>
    </subcellularLocation>
    <subcellularLocation>
        <location evidence="1">Cytoplasm</location>
    </subcellularLocation>
    <text evidence="1">Distribution is 50-50.</text>
</comment>
<comment type="similarity">
    <text evidence="1">Belongs to the SecA family.</text>
</comment>
<sequence length="938" mass="104771">MLSKLLRLGEGRMVKRLKGVADYVNTLSDDIEKLSDAELRGKTDEFRARLAGGKEDLDDVMPEAFAVVREAAWRVLNQRHFDVQIMGGAALHFGNVAEMKTGEGKTLTSVLPAYLNALPGKGVHIVTVNEYLAKRDAEQMGRVHRFLGLDVDVILGTLTPDQRRAAYNADITYGTNWELGFDYLRDNMALRLEDCVQRGHHFAIVDEVDSILIDEARTPLIISGPADGGSNWYTEFARLAPLMKPDVHYEVDIKKRVVGINEAGVEFVEDQLGIENLYEAANSPLISYLNNAIKAKELFERDKHYIVRNGEVFIVDEFTGRMLVGRRYNEGLHQAIEAKEHVEIKAENQTVAQVTLQNYFRMYEKLAGMTGTAETEAAELHEIYKLGVVPIPTNRPMVRKDQSDLIYKTEEAKYIAVVDDVAERYEKGQPVLIGTTSVERSEFLSRQFEKRRIPHNVLNAKYHEQEAGIVAEAGRLGAITVATNMAGRGTDIVLGGNVDYLLDRRLRQRGLDPIETPEEYEQGWHEELPHIKAEVAAEAKDVIAAGGLYVLGTERHESRRIDNQLRGRSGRQGDPGESRFYLSLADELMRRFNGATLETLLTRLNLPDDVPIEAKMVSRAIKSAQTQVEQQNFDIRKEVLKYDEVMNQQRKVVYAERRRILEGENLAGQAHQILVDVITAYVDGATAEGYSEDWDLEKLWEGLRQLYPVGIDHHDLIDSDAVGEPGELTREELLQALIADAERAYAAREAEIEEIAGEGAMRQLERNVLLNVLDRKWREHLYEMDYLREGIGLRGLAQQRPEVEYAREGYDMFIAMLDGMKEESVGFLFNVQVERAPSAPTVAAQAAPAGLAAFAAAAAEQAQAQTGGVATKERPAVGGLRAKGIDDKAQPLTYTGPSEDGGVEVKRSGGGTPSTGGTRKERREAARQQKTGRHAKRR</sequence>
<reference key="1">
    <citation type="submission" date="2006-12" db="EMBL/GenBank/DDBJ databases">
        <title>Complete sequence of Mycobacterium vanbaalenii PYR-1.</title>
        <authorList>
            <consortium name="US DOE Joint Genome Institute"/>
            <person name="Copeland A."/>
            <person name="Lucas S."/>
            <person name="Lapidus A."/>
            <person name="Barry K."/>
            <person name="Detter J.C."/>
            <person name="Glavina del Rio T."/>
            <person name="Hammon N."/>
            <person name="Israni S."/>
            <person name="Dalin E."/>
            <person name="Tice H."/>
            <person name="Pitluck S."/>
            <person name="Singan V."/>
            <person name="Schmutz J."/>
            <person name="Larimer F."/>
            <person name="Land M."/>
            <person name="Hauser L."/>
            <person name="Kyrpides N."/>
            <person name="Anderson I.J."/>
            <person name="Miller C."/>
            <person name="Richardson P."/>
        </authorList>
    </citation>
    <scope>NUCLEOTIDE SEQUENCE [LARGE SCALE GENOMIC DNA]</scope>
    <source>
        <strain>DSM 7251 / JCM 13017 / BCRC 16820 / KCTC 9966 / NRRL B-24157 / PYR-1</strain>
    </source>
</reference>
<keyword id="KW-0067">ATP-binding</keyword>
<keyword id="KW-1003">Cell membrane</keyword>
<keyword id="KW-0963">Cytoplasm</keyword>
<keyword id="KW-0472">Membrane</keyword>
<keyword id="KW-0547">Nucleotide-binding</keyword>
<keyword id="KW-0653">Protein transport</keyword>
<keyword id="KW-1278">Translocase</keyword>
<keyword id="KW-0811">Translocation</keyword>
<keyword id="KW-0813">Transport</keyword>
<evidence type="ECO:0000255" key="1">
    <source>
        <dbReference type="HAMAP-Rule" id="MF_01382"/>
    </source>
</evidence>
<evidence type="ECO:0000256" key="2">
    <source>
        <dbReference type="SAM" id="MobiDB-lite"/>
    </source>
</evidence>